<dbReference type="EC" id="4.1.1.1"/>
<dbReference type="EMBL" id="U71121">
    <property type="protein sequence ID" value="AAB16854.1"/>
    <property type="molecule type" value="Genomic_DNA"/>
</dbReference>
<dbReference type="EMBL" id="AL031804">
    <property type="protein sequence ID" value="CAA21216.1"/>
    <property type="molecule type" value="Genomic_DNA"/>
</dbReference>
<dbReference type="EMBL" id="AL161582">
    <property type="protein sequence ID" value="CAB80024.1"/>
    <property type="molecule type" value="Genomic_DNA"/>
</dbReference>
<dbReference type="EMBL" id="CP002687">
    <property type="protein sequence ID" value="AEE86169.1"/>
    <property type="molecule type" value="Genomic_DNA"/>
</dbReference>
<dbReference type="EMBL" id="AY070036">
    <property type="protein sequence ID" value="AAL49793.1"/>
    <property type="molecule type" value="mRNA"/>
</dbReference>
<dbReference type="EMBL" id="AY122926">
    <property type="protein sequence ID" value="AAM67459.1"/>
    <property type="molecule type" value="mRNA"/>
</dbReference>
<dbReference type="PIR" id="T05315">
    <property type="entry name" value="T05315"/>
</dbReference>
<dbReference type="RefSeq" id="NP_195033.1">
    <property type="nucleotide sequence ID" value="NM_119461.4"/>
</dbReference>
<dbReference type="SMR" id="O82647"/>
<dbReference type="BioGRID" id="14729">
    <property type="interactions" value="9"/>
</dbReference>
<dbReference type="FunCoup" id="O82647">
    <property type="interactions" value="259"/>
</dbReference>
<dbReference type="STRING" id="3702.O82647"/>
<dbReference type="PaxDb" id="3702-AT4G33070.1"/>
<dbReference type="ProteomicsDB" id="236289"/>
<dbReference type="EnsemblPlants" id="AT4G33070.1">
    <property type="protein sequence ID" value="AT4G33070.1"/>
    <property type="gene ID" value="AT4G33070"/>
</dbReference>
<dbReference type="GeneID" id="829444"/>
<dbReference type="Gramene" id="AT4G33070.1">
    <property type="protein sequence ID" value="AT4G33070.1"/>
    <property type="gene ID" value="AT4G33070"/>
</dbReference>
<dbReference type="KEGG" id="ath:AT4G33070"/>
<dbReference type="Araport" id="AT4G33070"/>
<dbReference type="TAIR" id="AT4G33070">
    <property type="gene designation" value="PDC1"/>
</dbReference>
<dbReference type="eggNOG" id="KOG1184">
    <property type="taxonomic scope" value="Eukaryota"/>
</dbReference>
<dbReference type="HOGENOM" id="CLU_013748_0_2_1"/>
<dbReference type="InParanoid" id="O82647"/>
<dbReference type="OMA" id="PMRASQE"/>
<dbReference type="OrthoDB" id="3970464at2759"/>
<dbReference type="PhylomeDB" id="O82647"/>
<dbReference type="BioCyc" id="ARA:AT4G33070-MONOMER"/>
<dbReference type="BRENDA" id="4.1.1.1">
    <property type="organism ID" value="399"/>
</dbReference>
<dbReference type="PRO" id="PR:O82647"/>
<dbReference type="Proteomes" id="UP000006548">
    <property type="component" value="Chromosome 4"/>
</dbReference>
<dbReference type="ExpressionAtlas" id="O82647">
    <property type="expression patterns" value="baseline and differential"/>
</dbReference>
<dbReference type="GO" id="GO:0005886">
    <property type="term" value="C:plasma membrane"/>
    <property type="evidence" value="ECO:0007005"/>
    <property type="project" value="TAIR"/>
</dbReference>
<dbReference type="GO" id="GO:0000287">
    <property type="term" value="F:magnesium ion binding"/>
    <property type="evidence" value="ECO:0007669"/>
    <property type="project" value="InterPro"/>
</dbReference>
<dbReference type="GO" id="GO:0004737">
    <property type="term" value="F:pyruvate decarboxylase activity"/>
    <property type="evidence" value="ECO:0007669"/>
    <property type="project" value="UniProtKB-EC"/>
</dbReference>
<dbReference type="GO" id="GO:0030976">
    <property type="term" value="F:thiamine pyrophosphate binding"/>
    <property type="evidence" value="ECO:0007669"/>
    <property type="project" value="InterPro"/>
</dbReference>
<dbReference type="GO" id="GO:0071456">
    <property type="term" value="P:cellular response to hypoxia"/>
    <property type="evidence" value="ECO:0007007"/>
    <property type="project" value="TAIR"/>
</dbReference>
<dbReference type="GO" id="GO:0034059">
    <property type="term" value="P:response to anoxia"/>
    <property type="evidence" value="ECO:0000315"/>
    <property type="project" value="UniProtKB"/>
</dbReference>
<dbReference type="CDD" id="cd02005">
    <property type="entry name" value="TPP_PDC_IPDC"/>
    <property type="match status" value="1"/>
</dbReference>
<dbReference type="CDD" id="cd07038">
    <property type="entry name" value="TPP_PYR_PDC_IPDC_like"/>
    <property type="match status" value="1"/>
</dbReference>
<dbReference type="FunFam" id="3.40.50.1220:FF:000009">
    <property type="entry name" value="Pyruvate decarboxylase 1"/>
    <property type="match status" value="1"/>
</dbReference>
<dbReference type="FunFam" id="3.40.50.970:FF:000021">
    <property type="entry name" value="Pyruvate decarboxylase 1"/>
    <property type="match status" value="1"/>
</dbReference>
<dbReference type="FunFam" id="3.40.50.970:FF:000017">
    <property type="entry name" value="pyruvate decarboxylase 1"/>
    <property type="match status" value="1"/>
</dbReference>
<dbReference type="Gene3D" id="3.40.50.970">
    <property type="match status" value="2"/>
</dbReference>
<dbReference type="Gene3D" id="3.40.50.1220">
    <property type="entry name" value="TPP-binding domain"/>
    <property type="match status" value="1"/>
</dbReference>
<dbReference type="InterPro" id="IPR029035">
    <property type="entry name" value="DHS-like_NAD/FAD-binding_dom"/>
</dbReference>
<dbReference type="InterPro" id="IPR012110">
    <property type="entry name" value="PDC/IPDC-like"/>
</dbReference>
<dbReference type="InterPro" id="IPR029061">
    <property type="entry name" value="THDP-binding"/>
</dbReference>
<dbReference type="InterPro" id="IPR012000">
    <property type="entry name" value="Thiamin_PyroP_enz_cen_dom"/>
</dbReference>
<dbReference type="InterPro" id="IPR012001">
    <property type="entry name" value="Thiamin_PyroP_enz_TPP-bd_dom"/>
</dbReference>
<dbReference type="InterPro" id="IPR000399">
    <property type="entry name" value="TPP-bd_CS"/>
</dbReference>
<dbReference type="InterPro" id="IPR011766">
    <property type="entry name" value="TPP_enzyme_TPP-bd"/>
</dbReference>
<dbReference type="InterPro" id="IPR047214">
    <property type="entry name" value="TPP_PDC_IPDC"/>
</dbReference>
<dbReference type="InterPro" id="IPR047213">
    <property type="entry name" value="TPP_PYR_PDC_IPDC-like"/>
</dbReference>
<dbReference type="PANTHER" id="PTHR43452">
    <property type="entry name" value="PYRUVATE DECARBOXYLASE"/>
    <property type="match status" value="1"/>
</dbReference>
<dbReference type="PANTHER" id="PTHR43452:SF18">
    <property type="entry name" value="PYRUVATE DECARBOXYLASE 1"/>
    <property type="match status" value="1"/>
</dbReference>
<dbReference type="Pfam" id="PF02775">
    <property type="entry name" value="TPP_enzyme_C"/>
    <property type="match status" value="1"/>
</dbReference>
<dbReference type="Pfam" id="PF00205">
    <property type="entry name" value="TPP_enzyme_M"/>
    <property type="match status" value="1"/>
</dbReference>
<dbReference type="Pfam" id="PF02776">
    <property type="entry name" value="TPP_enzyme_N"/>
    <property type="match status" value="1"/>
</dbReference>
<dbReference type="PIRSF" id="PIRSF036565">
    <property type="entry name" value="Pyruvt_ip_decrb"/>
    <property type="match status" value="1"/>
</dbReference>
<dbReference type="SUPFAM" id="SSF52467">
    <property type="entry name" value="DHS-like NAD/FAD-binding domain"/>
    <property type="match status" value="1"/>
</dbReference>
<dbReference type="SUPFAM" id="SSF52518">
    <property type="entry name" value="Thiamin diphosphate-binding fold (THDP-binding)"/>
    <property type="match status" value="2"/>
</dbReference>
<dbReference type="PROSITE" id="PS00187">
    <property type="entry name" value="TPP_ENZYMES"/>
    <property type="match status" value="1"/>
</dbReference>
<comment type="function">
    <text evidence="2">May play a role in ethanolic fermentation during anoxia.</text>
</comment>
<comment type="catalytic activity">
    <reaction>
        <text>a 2-oxocarboxylate + H(+) = an aldehyde + CO2</text>
        <dbReference type="Rhea" id="RHEA:11628"/>
        <dbReference type="ChEBI" id="CHEBI:15378"/>
        <dbReference type="ChEBI" id="CHEBI:16526"/>
        <dbReference type="ChEBI" id="CHEBI:17478"/>
        <dbReference type="ChEBI" id="CHEBI:35179"/>
        <dbReference type="EC" id="4.1.1.1"/>
    </reaction>
</comment>
<comment type="cofactor">
    <cofactor>
        <name>a metal cation</name>
        <dbReference type="ChEBI" id="CHEBI:25213"/>
    </cofactor>
    <text>Binds 1 metal ion per subunit.</text>
</comment>
<comment type="cofactor">
    <cofactor>
        <name>thiamine diphosphate</name>
        <dbReference type="ChEBI" id="CHEBI:58937"/>
    </cofactor>
    <text>Binds 1 thiamine pyrophosphate per subunit.</text>
</comment>
<comment type="subunit">
    <text evidence="3">Homotetramer.</text>
</comment>
<comment type="tissue specificity">
    <text evidence="2">Highly expressed in seeds, and at lower levels in roots and siliques.</text>
</comment>
<comment type="induction">
    <text evidence="2">By anoxia and abscisic acid (ABA).</text>
</comment>
<comment type="disruption phenotype">
    <text evidence="2">No visible phenotype under normal growth conditions, but mutant plant roots are more sensitive to anoxia.</text>
</comment>
<comment type="similarity">
    <text evidence="3">Belongs to the TPP enzyme family.</text>
</comment>
<evidence type="ECO:0000250" key="1"/>
<evidence type="ECO:0000269" key="2">
    <source>
    </source>
</evidence>
<evidence type="ECO:0000305" key="3"/>
<protein>
    <recommendedName>
        <fullName>Pyruvate decarboxylase 1</fullName>
        <shortName>AtPDC1</shortName>
        <ecNumber>4.1.1.1</ecNumber>
    </recommendedName>
</protein>
<name>PDC1_ARATH</name>
<proteinExistence type="evidence at transcript level"/>
<accession>O82647</accession>
<accession>Q96535</accession>
<feature type="chain" id="PRO_0000422312" description="Pyruvate decarboxylase 1">
    <location>
        <begin position="1"/>
        <end position="607"/>
    </location>
</feature>
<feature type="region of interest" description="Thiamine pyrophosphate binding" evidence="1">
    <location>
        <begin position="434"/>
        <end position="516"/>
    </location>
</feature>
<feature type="binding site" evidence="1">
    <location>
        <position position="69"/>
    </location>
    <ligand>
        <name>substrate</name>
    </ligand>
</feature>
<feature type="binding site" evidence="1">
    <location>
        <position position="156"/>
    </location>
    <ligand>
        <name>substrate</name>
    </ligand>
</feature>
<feature type="binding site" evidence="1">
    <location>
        <position position="484"/>
    </location>
    <ligand>
        <name>Mg(2+)</name>
        <dbReference type="ChEBI" id="CHEBI:18420"/>
    </ligand>
</feature>
<feature type="binding site" evidence="1">
    <location>
        <position position="511"/>
    </location>
    <ligand>
        <name>Mg(2+)</name>
        <dbReference type="ChEBI" id="CHEBI:18420"/>
    </ligand>
</feature>
<feature type="binding site" evidence="1">
    <location>
        <position position="513"/>
    </location>
    <ligand>
        <name>Mg(2+)</name>
        <dbReference type="ChEBI" id="CHEBI:18420"/>
    </ligand>
</feature>
<feature type="binding site" evidence="1">
    <location>
        <position position="517"/>
    </location>
    <ligand>
        <name>substrate</name>
    </ligand>
</feature>
<feature type="sequence conflict" description="In Ref. 1; AAB16854." evidence="3" ref="1">
    <original>F</original>
    <variation>Y</variation>
    <location>
        <position position="220"/>
    </location>
</feature>
<feature type="sequence conflict" description="In Ref. 1; AAB16854." evidence="3" ref="1">
    <original>P</original>
    <variation>Q</variation>
    <location>
        <position position="256"/>
    </location>
</feature>
<feature type="sequence conflict" description="In Ref. 1; AAB16854." evidence="3" ref="1">
    <original>I</original>
    <variation>IA</variation>
    <location>
        <position position="429"/>
    </location>
</feature>
<feature type="sequence conflict" description="In Ref. 1; AAB16854." evidence="3" ref="1">
    <original>GCG</original>
    <variation>R</variation>
    <location>
        <begin position="447"/>
        <end position="449"/>
    </location>
</feature>
<feature type="sequence conflict" description="In Ref. 1; AAB16854." evidence="3" ref="1">
    <original>DD</original>
    <variation>GE</variation>
    <location>
        <begin position="583"/>
        <end position="584"/>
    </location>
</feature>
<feature type="sequence conflict" description="In Ref. 1; AAB16854." evidence="3" ref="1">
    <original>SRVSAANSRP</original>
    <variation>HASLLLTAVL</variation>
    <location>
        <begin position="594"/>
        <end position="603"/>
    </location>
</feature>
<reference key="1">
    <citation type="submission" date="1996-09" db="EMBL/GenBank/DDBJ databases">
        <title>Two pyruvate decarboxylase genes from Arabidopsis.</title>
        <authorList>
            <person name="Dolferus R."/>
            <person name="Peacock W.J."/>
            <person name="Dennis E.S."/>
        </authorList>
    </citation>
    <scope>NUCLEOTIDE SEQUENCE [GENOMIC DNA]</scope>
    <source>
        <strain>cv. C24</strain>
    </source>
</reference>
<reference key="2">
    <citation type="journal article" date="1999" name="Nature">
        <title>Sequence and analysis of chromosome 4 of the plant Arabidopsis thaliana.</title>
        <authorList>
            <person name="Mayer K.F.X."/>
            <person name="Schueller C."/>
            <person name="Wambutt R."/>
            <person name="Murphy G."/>
            <person name="Volckaert G."/>
            <person name="Pohl T."/>
            <person name="Duesterhoeft A."/>
            <person name="Stiekema W."/>
            <person name="Entian K.-D."/>
            <person name="Terryn N."/>
            <person name="Harris B."/>
            <person name="Ansorge W."/>
            <person name="Brandt P."/>
            <person name="Grivell L.A."/>
            <person name="Rieger M."/>
            <person name="Weichselgartner M."/>
            <person name="de Simone V."/>
            <person name="Obermaier B."/>
            <person name="Mache R."/>
            <person name="Mueller M."/>
            <person name="Kreis M."/>
            <person name="Delseny M."/>
            <person name="Puigdomenech P."/>
            <person name="Watson M."/>
            <person name="Schmidtheini T."/>
            <person name="Reichert B."/>
            <person name="Portetelle D."/>
            <person name="Perez-Alonso M."/>
            <person name="Boutry M."/>
            <person name="Bancroft I."/>
            <person name="Vos P."/>
            <person name="Hoheisel J."/>
            <person name="Zimmermann W."/>
            <person name="Wedler H."/>
            <person name="Ridley P."/>
            <person name="Langham S.-A."/>
            <person name="McCullagh B."/>
            <person name="Bilham L."/>
            <person name="Robben J."/>
            <person name="van der Schueren J."/>
            <person name="Grymonprez B."/>
            <person name="Chuang Y.-J."/>
            <person name="Vandenbussche F."/>
            <person name="Braeken M."/>
            <person name="Weltjens I."/>
            <person name="Voet M."/>
            <person name="Bastiaens I."/>
            <person name="Aert R."/>
            <person name="Defoor E."/>
            <person name="Weitzenegger T."/>
            <person name="Bothe G."/>
            <person name="Ramsperger U."/>
            <person name="Hilbert H."/>
            <person name="Braun M."/>
            <person name="Holzer E."/>
            <person name="Brandt A."/>
            <person name="Peters S."/>
            <person name="van Staveren M."/>
            <person name="Dirkse W."/>
            <person name="Mooijman P."/>
            <person name="Klein Lankhorst R."/>
            <person name="Rose M."/>
            <person name="Hauf J."/>
            <person name="Koetter P."/>
            <person name="Berneiser S."/>
            <person name="Hempel S."/>
            <person name="Feldpausch M."/>
            <person name="Lamberth S."/>
            <person name="Van den Daele H."/>
            <person name="De Keyser A."/>
            <person name="Buysshaert C."/>
            <person name="Gielen J."/>
            <person name="Villarroel R."/>
            <person name="De Clercq R."/>
            <person name="van Montagu M."/>
            <person name="Rogers J."/>
            <person name="Cronin A."/>
            <person name="Quail M.A."/>
            <person name="Bray-Allen S."/>
            <person name="Clark L."/>
            <person name="Doggett J."/>
            <person name="Hall S."/>
            <person name="Kay M."/>
            <person name="Lennard N."/>
            <person name="McLay K."/>
            <person name="Mayes R."/>
            <person name="Pettett A."/>
            <person name="Rajandream M.A."/>
            <person name="Lyne M."/>
            <person name="Benes V."/>
            <person name="Rechmann S."/>
            <person name="Borkova D."/>
            <person name="Bloecker H."/>
            <person name="Scharfe M."/>
            <person name="Grimm M."/>
            <person name="Loehnert T.-H."/>
            <person name="Dose S."/>
            <person name="de Haan M."/>
            <person name="Maarse A.C."/>
            <person name="Schaefer M."/>
            <person name="Mueller-Auer S."/>
            <person name="Gabel C."/>
            <person name="Fuchs M."/>
            <person name="Fartmann B."/>
            <person name="Granderath K."/>
            <person name="Dauner D."/>
            <person name="Herzl A."/>
            <person name="Neumann S."/>
            <person name="Argiriou A."/>
            <person name="Vitale D."/>
            <person name="Liguori R."/>
            <person name="Piravandi E."/>
            <person name="Massenet O."/>
            <person name="Quigley F."/>
            <person name="Clabauld G."/>
            <person name="Muendlein A."/>
            <person name="Felber R."/>
            <person name="Schnabl S."/>
            <person name="Hiller R."/>
            <person name="Schmidt W."/>
            <person name="Lecharny A."/>
            <person name="Aubourg S."/>
            <person name="Chefdor F."/>
            <person name="Cooke R."/>
            <person name="Berger C."/>
            <person name="Monfort A."/>
            <person name="Casacuberta E."/>
            <person name="Gibbons T."/>
            <person name="Weber N."/>
            <person name="Vandenbol M."/>
            <person name="Bargues M."/>
            <person name="Terol J."/>
            <person name="Torres A."/>
            <person name="Perez-Perez A."/>
            <person name="Purnelle B."/>
            <person name="Bent E."/>
            <person name="Johnson S."/>
            <person name="Tacon D."/>
            <person name="Jesse T."/>
            <person name="Heijnen L."/>
            <person name="Schwarz S."/>
            <person name="Scholler P."/>
            <person name="Heber S."/>
            <person name="Francs P."/>
            <person name="Bielke C."/>
            <person name="Frishman D."/>
            <person name="Haase D."/>
            <person name="Lemcke K."/>
            <person name="Mewes H.-W."/>
            <person name="Stocker S."/>
            <person name="Zaccaria P."/>
            <person name="Bevan M."/>
            <person name="Wilson R.K."/>
            <person name="de la Bastide M."/>
            <person name="Habermann K."/>
            <person name="Parnell L."/>
            <person name="Dedhia N."/>
            <person name="Gnoj L."/>
            <person name="Schutz K."/>
            <person name="Huang E."/>
            <person name="Spiegel L."/>
            <person name="Sekhon M."/>
            <person name="Murray J."/>
            <person name="Sheet P."/>
            <person name="Cordes M."/>
            <person name="Abu-Threideh J."/>
            <person name="Stoneking T."/>
            <person name="Kalicki J."/>
            <person name="Graves T."/>
            <person name="Harmon G."/>
            <person name="Edwards J."/>
            <person name="Latreille P."/>
            <person name="Courtney L."/>
            <person name="Cloud J."/>
            <person name="Abbott A."/>
            <person name="Scott K."/>
            <person name="Johnson D."/>
            <person name="Minx P."/>
            <person name="Bentley D."/>
            <person name="Fulton B."/>
            <person name="Miller N."/>
            <person name="Greco T."/>
            <person name="Kemp K."/>
            <person name="Kramer J."/>
            <person name="Fulton L."/>
            <person name="Mardis E."/>
            <person name="Dante M."/>
            <person name="Pepin K."/>
            <person name="Hillier L.W."/>
            <person name="Nelson J."/>
            <person name="Spieth J."/>
            <person name="Ryan E."/>
            <person name="Andrews S."/>
            <person name="Geisel C."/>
            <person name="Layman D."/>
            <person name="Du H."/>
            <person name="Ali J."/>
            <person name="Berghoff A."/>
            <person name="Jones K."/>
            <person name="Drone K."/>
            <person name="Cotton M."/>
            <person name="Joshu C."/>
            <person name="Antonoiu B."/>
            <person name="Zidanic M."/>
            <person name="Strong C."/>
            <person name="Sun H."/>
            <person name="Lamar B."/>
            <person name="Yordan C."/>
            <person name="Ma P."/>
            <person name="Zhong J."/>
            <person name="Preston R."/>
            <person name="Vil D."/>
            <person name="Shekher M."/>
            <person name="Matero A."/>
            <person name="Shah R."/>
            <person name="Swaby I.K."/>
            <person name="O'Shaughnessy A."/>
            <person name="Rodriguez M."/>
            <person name="Hoffman J."/>
            <person name="Till S."/>
            <person name="Granat S."/>
            <person name="Shohdy N."/>
            <person name="Hasegawa A."/>
            <person name="Hameed A."/>
            <person name="Lodhi M."/>
            <person name="Johnson A."/>
            <person name="Chen E."/>
            <person name="Marra M.A."/>
            <person name="Martienssen R."/>
            <person name="McCombie W.R."/>
        </authorList>
    </citation>
    <scope>NUCLEOTIDE SEQUENCE [LARGE SCALE GENOMIC DNA]</scope>
    <source>
        <strain>cv. Columbia</strain>
    </source>
</reference>
<reference key="3">
    <citation type="journal article" date="2017" name="Plant J.">
        <title>Araport11: a complete reannotation of the Arabidopsis thaliana reference genome.</title>
        <authorList>
            <person name="Cheng C.Y."/>
            <person name="Krishnakumar V."/>
            <person name="Chan A.P."/>
            <person name="Thibaud-Nissen F."/>
            <person name="Schobel S."/>
            <person name="Town C.D."/>
        </authorList>
    </citation>
    <scope>GENOME REANNOTATION</scope>
    <source>
        <strain>cv. Columbia</strain>
    </source>
</reference>
<reference key="4">
    <citation type="journal article" date="2003" name="Science">
        <title>Empirical analysis of transcriptional activity in the Arabidopsis genome.</title>
        <authorList>
            <person name="Yamada K."/>
            <person name="Lim J."/>
            <person name="Dale J.M."/>
            <person name="Chen H."/>
            <person name="Shinn P."/>
            <person name="Palm C.J."/>
            <person name="Southwick A.M."/>
            <person name="Wu H.C."/>
            <person name="Kim C.J."/>
            <person name="Nguyen M."/>
            <person name="Pham P.K."/>
            <person name="Cheuk R.F."/>
            <person name="Karlin-Newmann G."/>
            <person name="Liu S.X."/>
            <person name="Lam B."/>
            <person name="Sakano H."/>
            <person name="Wu T."/>
            <person name="Yu G."/>
            <person name="Miranda M."/>
            <person name="Quach H.L."/>
            <person name="Tripp M."/>
            <person name="Chang C.H."/>
            <person name="Lee J.M."/>
            <person name="Toriumi M.J."/>
            <person name="Chan M.M."/>
            <person name="Tang C.C."/>
            <person name="Onodera C.S."/>
            <person name="Deng J.M."/>
            <person name="Akiyama K."/>
            <person name="Ansari Y."/>
            <person name="Arakawa T."/>
            <person name="Banh J."/>
            <person name="Banno F."/>
            <person name="Bowser L."/>
            <person name="Brooks S.Y."/>
            <person name="Carninci P."/>
            <person name="Chao Q."/>
            <person name="Choy N."/>
            <person name="Enju A."/>
            <person name="Goldsmith A.D."/>
            <person name="Gurjal M."/>
            <person name="Hansen N.F."/>
            <person name="Hayashizaki Y."/>
            <person name="Johnson-Hopson C."/>
            <person name="Hsuan V.W."/>
            <person name="Iida K."/>
            <person name="Karnes M."/>
            <person name="Khan S."/>
            <person name="Koesema E."/>
            <person name="Ishida J."/>
            <person name="Jiang P.X."/>
            <person name="Jones T."/>
            <person name="Kawai J."/>
            <person name="Kamiya A."/>
            <person name="Meyers C."/>
            <person name="Nakajima M."/>
            <person name="Narusaka M."/>
            <person name="Seki M."/>
            <person name="Sakurai T."/>
            <person name="Satou M."/>
            <person name="Tamse R."/>
            <person name="Vaysberg M."/>
            <person name="Wallender E.K."/>
            <person name="Wong C."/>
            <person name="Yamamura Y."/>
            <person name="Yuan S."/>
            <person name="Shinozaki K."/>
            <person name="Davis R.W."/>
            <person name="Theologis A."/>
            <person name="Ecker J.R."/>
        </authorList>
    </citation>
    <scope>NUCLEOTIDE SEQUENCE [LARGE SCALE MRNA]</scope>
    <source>
        <strain>cv. Columbia</strain>
    </source>
</reference>
<reference key="5">
    <citation type="journal article" date="2003" name="Plant Physiol.">
        <title>The pyruvate decarboxylase1 gene of Arabidopsis is required during anoxia but not other environmental stresses.</title>
        <authorList>
            <person name="Kuersteiner O."/>
            <person name="Dupuis I."/>
            <person name="Kuhlemeier C."/>
        </authorList>
    </citation>
    <scope>FUNCTION</scope>
    <scope>TISSUE SPECIFICITY</scope>
    <scope>INDUCTION</scope>
    <scope>DISRUPTION PHENOTYPE</scope>
</reference>
<sequence length="607" mass="66212">MDTKIGSIDDCKPTNGDVCSPTNGTVATIHNSVPSSAITINYCDATLGRHLARRLVQAGVTDVFSVPGDFNLTLLDHLMAEPDLNLIGCCNELNAGYAADGYARSRGVGACVVTFTVGGLSVLNAIAGAYSENLPLICIVGGPNSNDYGTNRILHHTIGLPDFSQELRCFQTVTCYQAVVNNLDDAHEQIDKAISTALKESKPVYISVSCNLAAIPHHTFSRDPVPFSLAPRLSNKMGLEAAVEATLEFLNKAVKPVMVGGPKLRVAKACDAFVELADASGYALAMMPSAKGFVPEHHPHFIGTYWGAVSTPFCSEIVESADAYIFAGPIFNDYSSVGYSLLLKKEKAIVVQPDRITVANGPTFGCILMSDFFRELSKRVKRNETAYENYHRIFVPEGKPLKCESREPLRVNTMFQHIQKMLSSETAVIAETGDSWFNCQKLKLPKGCGYEFQMQYGSIGWSVGATLGYAQASPEKRVLAFIGDGSFQVTVQDISTMLRNGQKTIIFLINNGGYTIEVEIHDGPYNVIKNWNYTGLVDAIHNGEGNCWTAKVRYEEELVEAITTATTEKKDCLCFIEVILHKDDTSKELLEWGSRVSAANSRPPNPQ</sequence>
<keyword id="KW-0210">Decarboxylase</keyword>
<keyword id="KW-0456">Lyase</keyword>
<keyword id="KW-0460">Magnesium</keyword>
<keyword id="KW-0479">Metal-binding</keyword>
<keyword id="KW-0670">Pyruvate</keyword>
<keyword id="KW-1185">Reference proteome</keyword>
<keyword id="KW-0346">Stress response</keyword>
<keyword id="KW-0786">Thiamine pyrophosphate</keyword>
<organism>
    <name type="scientific">Arabidopsis thaliana</name>
    <name type="common">Mouse-ear cress</name>
    <dbReference type="NCBI Taxonomy" id="3702"/>
    <lineage>
        <taxon>Eukaryota</taxon>
        <taxon>Viridiplantae</taxon>
        <taxon>Streptophyta</taxon>
        <taxon>Embryophyta</taxon>
        <taxon>Tracheophyta</taxon>
        <taxon>Spermatophyta</taxon>
        <taxon>Magnoliopsida</taxon>
        <taxon>eudicotyledons</taxon>
        <taxon>Gunneridae</taxon>
        <taxon>Pentapetalae</taxon>
        <taxon>rosids</taxon>
        <taxon>malvids</taxon>
        <taxon>Brassicales</taxon>
        <taxon>Brassicaceae</taxon>
        <taxon>Camelineae</taxon>
        <taxon>Arabidopsis</taxon>
    </lineage>
</organism>
<gene>
    <name type="primary">PDC1</name>
    <name type="ordered locus">At4g33070</name>
    <name type="ORF">F4I10.4</name>
</gene>